<organism>
    <name type="scientific">Escherichia phage G4</name>
    <name type="common">Bacteriophage G4</name>
    <dbReference type="NCBI Taxonomy" id="10843"/>
    <lineage>
        <taxon>Viruses</taxon>
        <taxon>Monodnaviria</taxon>
        <taxon>Sangervirae</taxon>
        <taxon>Phixviricota</taxon>
        <taxon>Malgrandaviricetes</taxon>
        <taxon>Petitvirales</taxon>
        <taxon>Microviridae</taxon>
        <taxon>Bullavirinae</taxon>
        <taxon>Gequatrovirus</taxon>
        <taxon>Gequatrovirus G4</taxon>
    </lineage>
</organism>
<name>VGE_BPG4</name>
<reference key="1">
    <citation type="journal article" date="1978" name="Nature">
        <title>Nucleotide sequence of bacteriophage G4 DNA.</title>
        <authorList>
            <person name="Godson G.N."/>
            <person name="Barrell B.G."/>
            <person name="Staden R."/>
            <person name="Fiddes J.C."/>
        </authorList>
    </citation>
    <scope>NUCLEOTIDE SEQUENCE [GENOMIC DNA]</scope>
</reference>
<reference key="2">
    <citation type="journal article" date="1979" name="J. Mol. Biol.">
        <title>Evolution of the three overlapping gene systems in G4 and phi X174.</title>
        <authorList>
            <person name="Fiddes J.C."/>
            <person name="Godson G.N."/>
        </authorList>
    </citation>
    <scope>NUCLEOTIDE SEQUENCE [GENOMIC DNA]</scope>
</reference>
<proteinExistence type="predicted"/>
<comment type="function">
    <text>E protein is responsible for host cell lysis.</text>
</comment>
<sequence length="96" mass="10531">MEHWTLSGILAFLLLLSLFLPSLLITFIPLTSKPPVSSWKVLSLPKTSSMVLNAPLKPLNCSPSLFLFAPETKILSVTLKQTSVNSYALKVSCKDL</sequence>
<dbReference type="EMBL" id="V00657">
    <property type="protein sequence ID" value="CAA24017.1"/>
    <property type="molecule type" value="Genomic_DNA"/>
</dbReference>
<dbReference type="EMBL" id="M10637">
    <property type="protein sequence ID" value="AAA32327.1"/>
    <property type="molecule type" value="Genomic_DNA"/>
</dbReference>
<dbReference type="PIR" id="A04248">
    <property type="entry name" value="ZEBPG4"/>
</dbReference>
<dbReference type="SMR" id="P03640"/>
<dbReference type="Proteomes" id="UP000002140">
    <property type="component" value="Segment"/>
</dbReference>
<dbReference type="GO" id="GO:0004857">
    <property type="term" value="F:enzyme inhibitor activity"/>
    <property type="evidence" value="ECO:0007669"/>
    <property type="project" value="InterPro"/>
</dbReference>
<dbReference type="GO" id="GO:0031640">
    <property type="term" value="P:killing of cells of another organism"/>
    <property type="evidence" value="ECO:0007669"/>
    <property type="project" value="UniProtKB-KW"/>
</dbReference>
<dbReference type="InterPro" id="IPR007605">
    <property type="entry name" value="Micrvir_lysisE"/>
</dbReference>
<dbReference type="Pfam" id="PF04517">
    <property type="entry name" value="Microvir_lysis"/>
    <property type="match status" value="1"/>
</dbReference>
<accession>P03640</accession>
<keyword id="KW-0204">Cytolysis</keyword>
<keyword id="KW-0578">Host cell lysis by virus</keyword>
<keyword id="KW-1185">Reference proteome</keyword>
<keyword id="KW-1188">Viral release from host cell</keyword>
<protein>
    <recommendedName>
        <fullName>Lysis protein</fullName>
        <shortName>E protein</shortName>
    </recommendedName>
    <alternativeName>
        <fullName>GPE</fullName>
    </alternativeName>
</protein>
<organismHost>
    <name type="scientific">Escherichia coli</name>
    <dbReference type="NCBI Taxonomy" id="562"/>
</organismHost>
<evidence type="ECO:0000305" key="1"/>
<gene>
    <name type="primary">E</name>
</gene>
<feature type="chain" id="PRO_0000164883" description="Lysis protein">
    <location>
        <begin position="1"/>
        <end position="96"/>
    </location>
</feature>
<feature type="sequence conflict" description="In Ref. 2; AAA32327." evidence="1" ref="2">
    <original>AF</original>
    <variation>LS</variation>
    <location>
        <begin position="11"/>
        <end position="12"/>
    </location>
</feature>